<proteinExistence type="inferred from homology"/>
<dbReference type="EC" id="2.5.1.6" evidence="1"/>
<dbReference type="EMBL" id="AM421808">
    <property type="protein sequence ID" value="CAM09728.1"/>
    <property type="molecule type" value="Genomic_DNA"/>
</dbReference>
<dbReference type="RefSeq" id="WP_002214496.1">
    <property type="nucleotide sequence ID" value="NC_008767.1"/>
</dbReference>
<dbReference type="SMR" id="A1KS98"/>
<dbReference type="KEGG" id="nmc:NMC0422"/>
<dbReference type="HOGENOM" id="CLU_041802_1_1_4"/>
<dbReference type="UniPathway" id="UPA00315">
    <property type="reaction ID" value="UER00080"/>
</dbReference>
<dbReference type="Proteomes" id="UP000002286">
    <property type="component" value="Chromosome"/>
</dbReference>
<dbReference type="GO" id="GO:0005737">
    <property type="term" value="C:cytoplasm"/>
    <property type="evidence" value="ECO:0007669"/>
    <property type="project" value="UniProtKB-SubCell"/>
</dbReference>
<dbReference type="GO" id="GO:0005524">
    <property type="term" value="F:ATP binding"/>
    <property type="evidence" value="ECO:0007669"/>
    <property type="project" value="UniProtKB-UniRule"/>
</dbReference>
<dbReference type="GO" id="GO:0000287">
    <property type="term" value="F:magnesium ion binding"/>
    <property type="evidence" value="ECO:0007669"/>
    <property type="project" value="UniProtKB-UniRule"/>
</dbReference>
<dbReference type="GO" id="GO:0004478">
    <property type="term" value="F:methionine adenosyltransferase activity"/>
    <property type="evidence" value="ECO:0007669"/>
    <property type="project" value="UniProtKB-UniRule"/>
</dbReference>
<dbReference type="GO" id="GO:0006730">
    <property type="term" value="P:one-carbon metabolic process"/>
    <property type="evidence" value="ECO:0007669"/>
    <property type="project" value="UniProtKB-KW"/>
</dbReference>
<dbReference type="GO" id="GO:0006556">
    <property type="term" value="P:S-adenosylmethionine biosynthetic process"/>
    <property type="evidence" value="ECO:0007669"/>
    <property type="project" value="UniProtKB-UniRule"/>
</dbReference>
<dbReference type="CDD" id="cd18079">
    <property type="entry name" value="S-AdoMet_synt"/>
    <property type="match status" value="1"/>
</dbReference>
<dbReference type="FunFam" id="3.30.300.10:FF:000003">
    <property type="entry name" value="S-adenosylmethionine synthase"/>
    <property type="match status" value="1"/>
</dbReference>
<dbReference type="FunFam" id="3.30.300.10:FF:000004">
    <property type="entry name" value="S-adenosylmethionine synthase"/>
    <property type="match status" value="1"/>
</dbReference>
<dbReference type="Gene3D" id="3.30.300.10">
    <property type="match status" value="3"/>
</dbReference>
<dbReference type="HAMAP" id="MF_00086">
    <property type="entry name" value="S_AdoMet_synth1"/>
    <property type="match status" value="1"/>
</dbReference>
<dbReference type="InterPro" id="IPR022631">
    <property type="entry name" value="ADOMET_SYNTHASE_CS"/>
</dbReference>
<dbReference type="InterPro" id="IPR022630">
    <property type="entry name" value="S-AdoMet_synt_C"/>
</dbReference>
<dbReference type="InterPro" id="IPR022629">
    <property type="entry name" value="S-AdoMet_synt_central"/>
</dbReference>
<dbReference type="InterPro" id="IPR022628">
    <property type="entry name" value="S-AdoMet_synt_N"/>
</dbReference>
<dbReference type="InterPro" id="IPR002133">
    <property type="entry name" value="S-AdoMet_synthetase"/>
</dbReference>
<dbReference type="InterPro" id="IPR022636">
    <property type="entry name" value="S-AdoMet_synthetase_sfam"/>
</dbReference>
<dbReference type="NCBIfam" id="TIGR01034">
    <property type="entry name" value="metK"/>
    <property type="match status" value="1"/>
</dbReference>
<dbReference type="PANTHER" id="PTHR11964">
    <property type="entry name" value="S-ADENOSYLMETHIONINE SYNTHETASE"/>
    <property type="match status" value="1"/>
</dbReference>
<dbReference type="Pfam" id="PF02773">
    <property type="entry name" value="S-AdoMet_synt_C"/>
    <property type="match status" value="1"/>
</dbReference>
<dbReference type="Pfam" id="PF02772">
    <property type="entry name" value="S-AdoMet_synt_M"/>
    <property type="match status" value="1"/>
</dbReference>
<dbReference type="Pfam" id="PF00438">
    <property type="entry name" value="S-AdoMet_synt_N"/>
    <property type="match status" value="1"/>
</dbReference>
<dbReference type="PIRSF" id="PIRSF000497">
    <property type="entry name" value="MAT"/>
    <property type="match status" value="1"/>
</dbReference>
<dbReference type="SUPFAM" id="SSF55973">
    <property type="entry name" value="S-adenosylmethionine synthetase"/>
    <property type="match status" value="3"/>
</dbReference>
<dbReference type="PROSITE" id="PS00376">
    <property type="entry name" value="ADOMET_SYNTHASE_1"/>
    <property type="match status" value="1"/>
</dbReference>
<dbReference type="PROSITE" id="PS00377">
    <property type="entry name" value="ADOMET_SYNTHASE_2"/>
    <property type="match status" value="1"/>
</dbReference>
<comment type="function">
    <text evidence="1">Catalyzes the formation of S-adenosylmethionine (AdoMet) from methionine and ATP. The overall synthetic reaction is composed of two sequential steps, AdoMet formation and the subsequent tripolyphosphate hydrolysis which occurs prior to release of AdoMet from the enzyme.</text>
</comment>
<comment type="catalytic activity">
    <reaction evidence="1">
        <text>L-methionine + ATP + H2O = S-adenosyl-L-methionine + phosphate + diphosphate</text>
        <dbReference type="Rhea" id="RHEA:21080"/>
        <dbReference type="ChEBI" id="CHEBI:15377"/>
        <dbReference type="ChEBI" id="CHEBI:30616"/>
        <dbReference type="ChEBI" id="CHEBI:33019"/>
        <dbReference type="ChEBI" id="CHEBI:43474"/>
        <dbReference type="ChEBI" id="CHEBI:57844"/>
        <dbReference type="ChEBI" id="CHEBI:59789"/>
        <dbReference type="EC" id="2.5.1.6"/>
    </reaction>
</comment>
<comment type="cofactor">
    <cofactor evidence="1">
        <name>Mg(2+)</name>
        <dbReference type="ChEBI" id="CHEBI:18420"/>
    </cofactor>
    <text evidence="1">Binds 2 divalent ions per subunit.</text>
</comment>
<comment type="cofactor">
    <cofactor evidence="1">
        <name>K(+)</name>
        <dbReference type="ChEBI" id="CHEBI:29103"/>
    </cofactor>
    <text evidence="1">Binds 1 potassium ion per subunit.</text>
</comment>
<comment type="pathway">
    <text evidence="1">Amino-acid biosynthesis; S-adenosyl-L-methionine biosynthesis; S-adenosyl-L-methionine from L-methionine: step 1/1.</text>
</comment>
<comment type="subunit">
    <text evidence="1">Homotetramer; dimer of dimers.</text>
</comment>
<comment type="subcellular location">
    <subcellularLocation>
        <location evidence="1">Cytoplasm</location>
    </subcellularLocation>
</comment>
<comment type="similarity">
    <text evidence="1">Belongs to the AdoMet synthase family.</text>
</comment>
<evidence type="ECO:0000255" key="1">
    <source>
        <dbReference type="HAMAP-Rule" id="MF_00086"/>
    </source>
</evidence>
<gene>
    <name evidence="1" type="primary">metK</name>
    <name type="ordered locus">NMC0422</name>
</gene>
<sequence length="389" mass="42091">MSEYLFTSESVSEGHPDKVADQVSDAILDAILAQDPKARVAAETLVNTGLCVLAGEITTTAQVDYIKVARETIKRIGYNSSELGFDANGCAVGVYYDQQSPDIAQGVNEGEGIDLNQGAGDQGLMFGYACDETPTLMPFAIYYSHRLMQRQSELRKDGLLPWLRPDAKAQLTVVYDSESGKVKRIDTVVLSTQHDPEIGYEELKNAVIEQIIKPVLPSELLTDETKYLINPTGRFVIGGPQGDCGLTGRKIIVDTYGGAAPHGGGAFSGKDPSKVDRSAAYACRYVAKNIVAAGLATQCQIQVSYAIGVAEPTSISIDTFGTGKISEEKLITLVREHFDLRPKGIVQMLDLLRPIYSKSAAYGHFGREEPEFTWERTDKAAALRAAAGL</sequence>
<protein>
    <recommendedName>
        <fullName evidence="1">S-adenosylmethionine synthase</fullName>
        <shortName evidence="1">AdoMet synthase</shortName>
        <ecNumber evidence="1">2.5.1.6</ecNumber>
    </recommendedName>
    <alternativeName>
        <fullName evidence="1">MAT</fullName>
    </alternativeName>
    <alternativeName>
        <fullName evidence="1">Methionine adenosyltransferase</fullName>
    </alternativeName>
</protein>
<keyword id="KW-0067">ATP-binding</keyword>
<keyword id="KW-0963">Cytoplasm</keyword>
<keyword id="KW-0460">Magnesium</keyword>
<keyword id="KW-0479">Metal-binding</keyword>
<keyword id="KW-0547">Nucleotide-binding</keyword>
<keyword id="KW-0554">One-carbon metabolism</keyword>
<keyword id="KW-0630">Potassium</keyword>
<keyword id="KW-0808">Transferase</keyword>
<organism>
    <name type="scientific">Neisseria meningitidis serogroup C / serotype 2a (strain ATCC 700532 / DSM 15464 / FAM18)</name>
    <dbReference type="NCBI Taxonomy" id="272831"/>
    <lineage>
        <taxon>Bacteria</taxon>
        <taxon>Pseudomonadati</taxon>
        <taxon>Pseudomonadota</taxon>
        <taxon>Betaproteobacteria</taxon>
        <taxon>Neisseriales</taxon>
        <taxon>Neisseriaceae</taxon>
        <taxon>Neisseria</taxon>
    </lineage>
</organism>
<feature type="chain" id="PRO_0000302949" description="S-adenosylmethionine synthase">
    <location>
        <begin position="1"/>
        <end position="389"/>
    </location>
</feature>
<feature type="region of interest" description="Flexible loop" evidence="1">
    <location>
        <begin position="99"/>
        <end position="109"/>
    </location>
</feature>
<feature type="binding site" description="in other chain" evidence="1">
    <location>
        <position position="15"/>
    </location>
    <ligand>
        <name>ATP</name>
        <dbReference type="ChEBI" id="CHEBI:30616"/>
        <note>ligand shared between two neighboring subunits</note>
    </ligand>
</feature>
<feature type="binding site" evidence="1">
    <location>
        <position position="17"/>
    </location>
    <ligand>
        <name>Mg(2+)</name>
        <dbReference type="ChEBI" id="CHEBI:18420"/>
    </ligand>
</feature>
<feature type="binding site" evidence="1">
    <location>
        <position position="43"/>
    </location>
    <ligand>
        <name>K(+)</name>
        <dbReference type="ChEBI" id="CHEBI:29103"/>
    </ligand>
</feature>
<feature type="binding site" description="in other chain" evidence="1">
    <location>
        <position position="56"/>
    </location>
    <ligand>
        <name>L-methionine</name>
        <dbReference type="ChEBI" id="CHEBI:57844"/>
        <note>ligand shared between two neighboring subunits</note>
    </ligand>
</feature>
<feature type="binding site" description="in other chain" evidence="1">
    <location>
        <position position="99"/>
    </location>
    <ligand>
        <name>L-methionine</name>
        <dbReference type="ChEBI" id="CHEBI:57844"/>
        <note>ligand shared between two neighboring subunits</note>
    </ligand>
</feature>
<feature type="binding site" description="in other chain" evidence="1">
    <location>
        <begin position="166"/>
        <end position="168"/>
    </location>
    <ligand>
        <name>ATP</name>
        <dbReference type="ChEBI" id="CHEBI:30616"/>
        <note>ligand shared between two neighboring subunits</note>
    </ligand>
</feature>
<feature type="binding site" description="in other chain" evidence="1">
    <location>
        <begin position="234"/>
        <end position="235"/>
    </location>
    <ligand>
        <name>ATP</name>
        <dbReference type="ChEBI" id="CHEBI:30616"/>
        <note>ligand shared between two neighboring subunits</note>
    </ligand>
</feature>
<feature type="binding site" evidence="1">
    <location>
        <position position="243"/>
    </location>
    <ligand>
        <name>ATP</name>
        <dbReference type="ChEBI" id="CHEBI:30616"/>
        <note>ligand shared between two neighboring subunits</note>
    </ligand>
</feature>
<feature type="binding site" evidence="1">
    <location>
        <position position="243"/>
    </location>
    <ligand>
        <name>L-methionine</name>
        <dbReference type="ChEBI" id="CHEBI:57844"/>
        <note>ligand shared between two neighboring subunits</note>
    </ligand>
</feature>
<feature type="binding site" description="in other chain" evidence="1">
    <location>
        <begin position="249"/>
        <end position="250"/>
    </location>
    <ligand>
        <name>ATP</name>
        <dbReference type="ChEBI" id="CHEBI:30616"/>
        <note>ligand shared between two neighboring subunits</note>
    </ligand>
</feature>
<feature type="binding site" evidence="1">
    <location>
        <position position="266"/>
    </location>
    <ligand>
        <name>ATP</name>
        <dbReference type="ChEBI" id="CHEBI:30616"/>
        <note>ligand shared between two neighboring subunits</note>
    </ligand>
</feature>
<feature type="binding site" evidence="1">
    <location>
        <position position="270"/>
    </location>
    <ligand>
        <name>ATP</name>
        <dbReference type="ChEBI" id="CHEBI:30616"/>
        <note>ligand shared between two neighboring subunits</note>
    </ligand>
</feature>
<feature type="binding site" description="in other chain" evidence="1">
    <location>
        <position position="274"/>
    </location>
    <ligand>
        <name>L-methionine</name>
        <dbReference type="ChEBI" id="CHEBI:57844"/>
        <note>ligand shared between two neighboring subunits</note>
    </ligand>
</feature>
<accession>A1KS98</accession>
<name>METK_NEIMF</name>
<reference key="1">
    <citation type="journal article" date="2007" name="PLoS Genet.">
        <title>Meningococcal genetic variation mechanisms viewed through comparative analysis of serogroup C strain FAM18.</title>
        <authorList>
            <person name="Bentley S.D."/>
            <person name="Vernikos G.S."/>
            <person name="Snyder L.A.S."/>
            <person name="Churcher C."/>
            <person name="Arrowsmith C."/>
            <person name="Chillingworth T."/>
            <person name="Cronin A."/>
            <person name="Davis P.H."/>
            <person name="Holroyd N.E."/>
            <person name="Jagels K."/>
            <person name="Maddison M."/>
            <person name="Moule S."/>
            <person name="Rabbinowitsch E."/>
            <person name="Sharp S."/>
            <person name="Unwin L."/>
            <person name="Whitehead S."/>
            <person name="Quail M.A."/>
            <person name="Achtman M."/>
            <person name="Barrell B.G."/>
            <person name="Saunders N.J."/>
            <person name="Parkhill J."/>
        </authorList>
    </citation>
    <scope>NUCLEOTIDE SEQUENCE [LARGE SCALE GENOMIC DNA]</scope>
    <source>
        <strain>ATCC 700532 / DSM 15464 / FAM18</strain>
    </source>
</reference>